<sequence length="64" mass="7203">MSEETIVNCPTCGKNVVWGEQSPFRPFCSKRCQLIDLGEWAAEEKRIPSAGDLSDSDDWSEQQP</sequence>
<keyword id="KW-0479">Metal-binding</keyword>
<keyword id="KW-0862">Zinc</keyword>
<protein>
    <recommendedName>
        <fullName evidence="1">DNA gyrase inhibitor YacG</fullName>
    </recommendedName>
</protein>
<dbReference type="EMBL" id="CP000964">
    <property type="protein sequence ID" value="ACI09341.1"/>
    <property type="molecule type" value="Genomic_DNA"/>
</dbReference>
<dbReference type="SMR" id="B5Y1T7"/>
<dbReference type="KEGG" id="kpe:KPK_4637"/>
<dbReference type="HOGENOM" id="CLU_178280_3_1_6"/>
<dbReference type="Proteomes" id="UP000001734">
    <property type="component" value="Chromosome"/>
</dbReference>
<dbReference type="GO" id="GO:0008657">
    <property type="term" value="F:DNA topoisomerase type II (double strand cut, ATP-hydrolyzing) inhibitor activity"/>
    <property type="evidence" value="ECO:0007669"/>
    <property type="project" value="UniProtKB-UniRule"/>
</dbReference>
<dbReference type="GO" id="GO:0008270">
    <property type="term" value="F:zinc ion binding"/>
    <property type="evidence" value="ECO:0007669"/>
    <property type="project" value="UniProtKB-UniRule"/>
</dbReference>
<dbReference type="GO" id="GO:0006355">
    <property type="term" value="P:regulation of DNA-templated transcription"/>
    <property type="evidence" value="ECO:0007669"/>
    <property type="project" value="InterPro"/>
</dbReference>
<dbReference type="Gene3D" id="3.30.50.10">
    <property type="entry name" value="Erythroid Transcription Factor GATA-1, subunit A"/>
    <property type="match status" value="1"/>
</dbReference>
<dbReference type="HAMAP" id="MF_00649">
    <property type="entry name" value="DNA_gyrase_inhibitor_YacG"/>
    <property type="match status" value="1"/>
</dbReference>
<dbReference type="InterPro" id="IPR005584">
    <property type="entry name" value="DNA_gyrase_inhibitor_YacG"/>
</dbReference>
<dbReference type="InterPro" id="IPR013088">
    <property type="entry name" value="Znf_NHR/GATA"/>
</dbReference>
<dbReference type="NCBIfam" id="NF001638">
    <property type="entry name" value="PRK00418.1"/>
    <property type="match status" value="1"/>
</dbReference>
<dbReference type="PANTHER" id="PTHR36150">
    <property type="entry name" value="DNA GYRASE INHIBITOR YACG"/>
    <property type="match status" value="1"/>
</dbReference>
<dbReference type="PANTHER" id="PTHR36150:SF1">
    <property type="entry name" value="DNA GYRASE INHIBITOR YACG"/>
    <property type="match status" value="1"/>
</dbReference>
<dbReference type="Pfam" id="PF03884">
    <property type="entry name" value="YacG"/>
    <property type="match status" value="1"/>
</dbReference>
<dbReference type="SUPFAM" id="SSF57716">
    <property type="entry name" value="Glucocorticoid receptor-like (DNA-binding domain)"/>
    <property type="match status" value="1"/>
</dbReference>
<name>YACG_KLEP3</name>
<gene>
    <name evidence="1" type="primary">yacG</name>
    <name type="ordered locus">KPK_4637</name>
</gene>
<organism>
    <name type="scientific">Klebsiella pneumoniae (strain 342)</name>
    <dbReference type="NCBI Taxonomy" id="507522"/>
    <lineage>
        <taxon>Bacteria</taxon>
        <taxon>Pseudomonadati</taxon>
        <taxon>Pseudomonadota</taxon>
        <taxon>Gammaproteobacteria</taxon>
        <taxon>Enterobacterales</taxon>
        <taxon>Enterobacteriaceae</taxon>
        <taxon>Klebsiella/Raoultella group</taxon>
        <taxon>Klebsiella</taxon>
        <taxon>Klebsiella pneumoniae complex</taxon>
    </lineage>
</organism>
<accession>B5Y1T7</accession>
<proteinExistence type="inferred from homology"/>
<comment type="function">
    <text evidence="1">Inhibits all the catalytic activities of DNA gyrase by preventing its interaction with DNA. Acts by binding directly to the C-terminal domain of GyrB, which probably disrupts DNA binding by the gyrase.</text>
</comment>
<comment type="cofactor">
    <cofactor evidence="1">
        <name>Zn(2+)</name>
        <dbReference type="ChEBI" id="CHEBI:29105"/>
    </cofactor>
    <text evidence="1">Binds 1 zinc ion.</text>
</comment>
<comment type="subunit">
    <text evidence="1">Interacts with GyrB.</text>
</comment>
<comment type="similarity">
    <text evidence="1">Belongs to the DNA gyrase inhibitor YacG family.</text>
</comment>
<evidence type="ECO:0000255" key="1">
    <source>
        <dbReference type="HAMAP-Rule" id="MF_00649"/>
    </source>
</evidence>
<evidence type="ECO:0000256" key="2">
    <source>
        <dbReference type="SAM" id="MobiDB-lite"/>
    </source>
</evidence>
<reference key="1">
    <citation type="journal article" date="2008" name="PLoS Genet.">
        <title>Complete genome sequence of the N2-fixing broad host range endophyte Klebsiella pneumoniae 342 and virulence predictions verified in mice.</title>
        <authorList>
            <person name="Fouts D.E."/>
            <person name="Tyler H.L."/>
            <person name="DeBoy R.T."/>
            <person name="Daugherty S."/>
            <person name="Ren Q."/>
            <person name="Badger J.H."/>
            <person name="Durkin A.S."/>
            <person name="Huot H."/>
            <person name="Shrivastava S."/>
            <person name="Kothari S."/>
            <person name="Dodson R.J."/>
            <person name="Mohamoud Y."/>
            <person name="Khouri H."/>
            <person name="Roesch L.F.W."/>
            <person name="Krogfelt K.A."/>
            <person name="Struve C."/>
            <person name="Triplett E.W."/>
            <person name="Methe B.A."/>
        </authorList>
    </citation>
    <scope>NUCLEOTIDE SEQUENCE [LARGE SCALE GENOMIC DNA]</scope>
    <source>
        <strain>342</strain>
    </source>
</reference>
<feature type="chain" id="PRO_1000130966" description="DNA gyrase inhibitor YacG">
    <location>
        <begin position="1"/>
        <end position="64"/>
    </location>
</feature>
<feature type="region of interest" description="Disordered" evidence="2">
    <location>
        <begin position="45"/>
        <end position="64"/>
    </location>
</feature>
<feature type="compositionally biased region" description="Acidic residues" evidence="2">
    <location>
        <begin position="54"/>
        <end position="64"/>
    </location>
</feature>
<feature type="binding site" evidence="1">
    <location>
        <position position="9"/>
    </location>
    <ligand>
        <name>Zn(2+)</name>
        <dbReference type="ChEBI" id="CHEBI:29105"/>
    </ligand>
</feature>
<feature type="binding site" evidence="1">
    <location>
        <position position="12"/>
    </location>
    <ligand>
        <name>Zn(2+)</name>
        <dbReference type="ChEBI" id="CHEBI:29105"/>
    </ligand>
</feature>
<feature type="binding site" evidence="1">
    <location>
        <position position="28"/>
    </location>
    <ligand>
        <name>Zn(2+)</name>
        <dbReference type="ChEBI" id="CHEBI:29105"/>
    </ligand>
</feature>
<feature type="binding site" evidence="1">
    <location>
        <position position="32"/>
    </location>
    <ligand>
        <name>Zn(2+)</name>
        <dbReference type="ChEBI" id="CHEBI:29105"/>
    </ligand>
</feature>